<organism>
    <name type="scientific">Vibrio atlanticus (strain LGP32)</name>
    <name type="common">Vibrio splendidus (strain Mel32)</name>
    <dbReference type="NCBI Taxonomy" id="575788"/>
    <lineage>
        <taxon>Bacteria</taxon>
        <taxon>Pseudomonadati</taxon>
        <taxon>Pseudomonadota</taxon>
        <taxon>Gammaproteobacteria</taxon>
        <taxon>Vibrionales</taxon>
        <taxon>Vibrionaceae</taxon>
        <taxon>Vibrio</taxon>
    </lineage>
</organism>
<feature type="chain" id="PRO_1000118742" description="Methionine--tRNA ligase">
    <location>
        <begin position="1"/>
        <end position="686"/>
    </location>
</feature>
<feature type="domain" description="tRNA-binding" evidence="1">
    <location>
        <begin position="585"/>
        <end position="686"/>
    </location>
</feature>
<feature type="region of interest" description="Disordered" evidence="2">
    <location>
        <begin position="550"/>
        <end position="571"/>
    </location>
</feature>
<feature type="short sequence motif" description="'HIGH' region">
    <location>
        <begin position="15"/>
        <end position="25"/>
    </location>
</feature>
<feature type="short sequence motif" description="'KMSKS' region">
    <location>
        <begin position="332"/>
        <end position="336"/>
    </location>
</feature>
<feature type="binding site" evidence="1">
    <location>
        <position position="146"/>
    </location>
    <ligand>
        <name>Zn(2+)</name>
        <dbReference type="ChEBI" id="CHEBI:29105"/>
    </ligand>
</feature>
<feature type="binding site" evidence="1">
    <location>
        <position position="149"/>
    </location>
    <ligand>
        <name>Zn(2+)</name>
        <dbReference type="ChEBI" id="CHEBI:29105"/>
    </ligand>
</feature>
<feature type="binding site" evidence="1">
    <location>
        <position position="159"/>
    </location>
    <ligand>
        <name>Zn(2+)</name>
        <dbReference type="ChEBI" id="CHEBI:29105"/>
    </ligand>
</feature>
<feature type="binding site" evidence="1">
    <location>
        <position position="162"/>
    </location>
    <ligand>
        <name>Zn(2+)</name>
        <dbReference type="ChEBI" id="CHEBI:29105"/>
    </ligand>
</feature>
<feature type="binding site" evidence="1">
    <location>
        <position position="335"/>
    </location>
    <ligand>
        <name>ATP</name>
        <dbReference type="ChEBI" id="CHEBI:30616"/>
    </ligand>
</feature>
<keyword id="KW-0030">Aminoacyl-tRNA synthetase</keyword>
<keyword id="KW-0067">ATP-binding</keyword>
<keyword id="KW-0963">Cytoplasm</keyword>
<keyword id="KW-0436">Ligase</keyword>
<keyword id="KW-0479">Metal-binding</keyword>
<keyword id="KW-0547">Nucleotide-binding</keyword>
<keyword id="KW-0648">Protein biosynthesis</keyword>
<keyword id="KW-0694">RNA-binding</keyword>
<keyword id="KW-0820">tRNA-binding</keyword>
<keyword id="KW-0862">Zinc</keyword>
<proteinExistence type="inferred from homology"/>
<evidence type="ECO:0000255" key="1">
    <source>
        <dbReference type="HAMAP-Rule" id="MF_00098"/>
    </source>
</evidence>
<evidence type="ECO:0000256" key="2">
    <source>
        <dbReference type="SAM" id="MobiDB-lite"/>
    </source>
</evidence>
<accession>B7VLW8</accession>
<dbReference type="EC" id="6.1.1.10" evidence="1"/>
<dbReference type="EMBL" id="FM954972">
    <property type="protein sequence ID" value="CAV18060.1"/>
    <property type="molecule type" value="Genomic_DNA"/>
</dbReference>
<dbReference type="SMR" id="B7VLW8"/>
<dbReference type="STRING" id="575788.VS_1009"/>
<dbReference type="KEGG" id="vsp:VS_1009"/>
<dbReference type="PATRIC" id="fig|575788.5.peg.2332"/>
<dbReference type="eggNOG" id="COG0073">
    <property type="taxonomic scope" value="Bacteria"/>
</dbReference>
<dbReference type="eggNOG" id="COG0143">
    <property type="taxonomic scope" value="Bacteria"/>
</dbReference>
<dbReference type="HOGENOM" id="CLU_009710_7_0_6"/>
<dbReference type="Proteomes" id="UP000009100">
    <property type="component" value="Chromosome 1"/>
</dbReference>
<dbReference type="GO" id="GO:0005829">
    <property type="term" value="C:cytosol"/>
    <property type="evidence" value="ECO:0007669"/>
    <property type="project" value="TreeGrafter"/>
</dbReference>
<dbReference type="GO" id="GO:0005524">
    <property type="term" value="F:ATP binding"/>
    <property type="evidence" value="ECO:0007669"/>
    <property type="project" value="UniProtKB-UniRule"/>
</dbReference>
<dbReference type="GO" id="GO:0046872">
    <property type="term" value="F:metal ion binding"/>
    <property type="evidence" value="ECO:0007669"/>
    <property type="project" value="UniProtKB-KW"/>
</dbReference>
<dbReference type="GO" id="GO:0004825">
    <property type="term" value="F:methionine-tRNA ligase activity"/>
    <property type="evidence" value="ECO:0007669"/>
    <property type="project" value="UniProtKB-UniRule"/>
</dbReference>
<dbReference type="GO" id="GO:0000049">
    <property type="term" value="F:tRNA binding"/>
    <property type="evidence" value="ECO:0007669"/>
    <property type="project" value="UniProtKB-KW"/>
</dbReference>
<dbReference type="GO" id="GO:0006431">
    <property type="term" value="P:methionyl-tRNA aminoacylation"/>
    <property type="evidence" value="ECO:0007669"/>
    <property type="project" value="UniProtKB-UniRule"/>
</dbReference>
<dbReference type="CDD" id="cd07957">
    <property type="entry name" value="Anticodon_Ia_Met"/>
    <property type="match status" value="1"/>
</dbReference>
<dbReference type="CDD" id="cd00814">
    <property type="entry name" value="MetRS_core"/>
    <property type="match status" value="1"/>
</dbReference>
<dbReference type="CDD" id="cd02800">
    <property type="entry name" value="tRNA_bind_EcMetRS_like"/>
    <property type="match status" value="1"/>
</dbReference>
<dbReference type="FunFam" id="1.10.730.10:FF:000005">
    <property type="entry name" value="Methionine--tRNA ligase"/>
    <property type="match status" value="1"/>
</dbReference>
<dbReference type="FunFam" id="2.20.28.20:FF:000001">
    <property type="entry name" value="Methionine--tRNA ligase"/>
    <property type="match status" value="1"/>
</dbReference>
<dbReference type="FunFam" id="2.40.50.140:FF:000042">
    <property type="entry name" value="Methionine--tRNA ligase"/>
    <property type="match status" value="1"/>
</dbReference>
<dbReference type="Gene3D" id="3.40.50.620">
    <property type="entry name" value="HUPs"/>
    <property type="match status" value="1"/>
</dbReference>
<dbReference type="Gene3D" id="1.10.730.10">
    <property type="entry name" value="Isoleucyl-tRNA Synthetase, Domain 1"/>
    <property type="match status" value="1"/>
</dbReference>
<dbReference type="Gene3D" id="2.20.28.20">
    <property type="entry name" value="Methionyl-tRNA synthetase, Zn-domain"/>
    <property type="match status" value="1"/>
</dbReference>
<dbReference type="Gene3D" id="2.40.50.140">
    <property type="entry name" value="Nucleic acid-binding proteins"/>
    <property type="match status" value="1"/>
</dbReference>
<dbReference type="HAMAP" id="MF_00098">
    <property type="entry name" value="Met_tRNA_synth_type1"/>
    <property type="match status" value="1"/>
</dbReference>
<dbReference type="InterPro" id="IPR001412">
    <property type="entry name" value="aa-tRNA-synth_I_CS"/>
</dbReference>
<dbReference type="InterPro" id="IPR041872">
    <property type="entry name" value="Anticodon_Met"/>
</dbReference>
<dbReference type="InterPro" id="IPR004495">
    <property type="entry name" value="Met-tRNA-synth_bsu_C"/>
</dbReference>
<dbReference type="InterPro" id="IPR023458">
    <property type="entry name" value="Met-tRNA_ligase_1"/>
</dbReference>
<dbReference type="InterPro" id="IPR014758">
    <property type="entry name" value="Met-tRNA_synth"/>
</dbReference>
<dbReference type="InterPro" id="IPR015413">
    <property type="entry name" value="Methionyl/Leucyl_tRNA_Synth"/>
</dbReference>
<dbReference type="InterPro" id="IPR033911">
    <property type="entry name" value="MetRS_core"/>
</dbReference>
<dbReference type="InterPro" id="IPR029038">
    <property type="entry name" value="MetRS_Zn"/>
</dbReference>
<dbReference type="InterPro" id="IPR012340">
    <property type="entry name" value="NA-bd_OB-fold"/>
</dbReference>
<dbReference type="InterPro" id="IPR014729">
    <property type="entry name" value="Rossmann-like_a/b/a_fold"/>
</dbReference>
<dbReference type="InterPro" id="IPR002547">
    <property type="entry name" value="tRNA-bd_dom"/>
</dbReference>
<dbReference type="InterPro" id="IPR009080">
    <property type="entry name" value="tRNAsynth_Ia_anticodon-bd"/>
</dbReference>
<dbReference type="NCBIfam" id="TIGR00398">
    <property type="entry name" value="metG"/>
    <property type="match status" value="1"/>
</dbReference>
<dbReference type="NCBIfam" id="TIGR00399">
    <property type="entry name" value="metG_C_term"/>
    <property type="match status" value="1"/>
</dbReference>
<dbReference type="NCBIfam" id="NF001100">
    <property type="entry name" value="PRK00133.1"/>
    <property type="match status" value="1"/>
</dbReference>
<dbReference type="PANTHER" id="PTHR45765">
    <property type="entry name" value="METHIONINE--TRNA LIGASE"/>
    <property type="match status" value="1"/>
</dbReference>
<dbReference type="PANTHER" id="PTHR45765:SF1">
    <property type="entry name" value="METHIONINE--TRNA LIGASE, CYTOPLASMIC"/>
    <property type="match status" value="1"/>
</dbReference>
<dbReference type="Pfam" id="PF19303">
    <property type="entry name" value="Anticodon_3"/>
    <property type="match status" value="1"/>
</dbReference>
<dbReference type="Pfam" id="PF09334">
    <property type="entry name" value="tRNA-synt_1g"/>
    <property type="match status" value="1"/>
</dbReference>
<dbReference type="Pfam" id="PF01588">
    <property type="entry name" value="tRNA_bind"/>
    <property type="match status" value="1"/>
</dbReference>
<dbReference type="PRINTS" id="PR01041">
    <property type="entry name" value="TRNASYNTHMET"/>
</dbReference>
<dbReference type="SUPFAM" id="SSF47323">
    <property type="entry name" value="Anticodon-binding domain of a subclass of class I aminoacyl-tRNA synthetases"/>
    <property type="match status" value="1"/>
</dbReference>
<dbReference type="SUPFAM" id="SSF57770">
    <property type="entry name" value="Methionyl-tRNA synthetase (MetRS), Zn-domain"/>
    <property type="match status" value="1"/>
</dbReference>
<dbReference type="SUPFAM" id="SSF50249">
    <property type="entry name" value="Nucleic acid-binding proteins"/>
    <property type="match status" value="1"/>
</dbReference>
<dbReference type="SUPFAM" id="SSF52374">
    <property type="entry name" value="Nucleotidylyl transferase"/>
    <property type="match status" value="1"/>
</dbReference>
<dbReference type="PROSITE" id="PS00178">
    <property type="entry name" value="AA_TRNA_LIGASE_I"/>
    <property type="match status" value="1"/>
</dbReference>
<dbReference type="PROSITE" id="PS50886">
    <property type="entry name" value="TRBD"/>
    <property type="match status" value="1"/>
</dbReference>
<gene>
    <name evidence="1" type="primary">metG</name>
    <name type="ordered locus">VS_1009</name>
</gene>
<comment type="function">
    <text evidence="1">Is required not only for elongation of protein synthesis but also for the initiation of all mRNA translation through initiator tRNA(fMet) aminoacylation.</text>
</comment>
<comment type="catalytic activity">
    <reaction evidence="1">
        <text>tRNA(Met) + L-methionine + ATP = L-methionyl-tRNA(Met) + AMP + diphosphate</text>
        <dbReference type="Rhea" id="RHEA:13481"/>
        <dbReference type="Rhea" id="RHEA-COMP:9667"/>
        <dbReference type="Rhea" id="RHEA-COMP:9698"/>
        <dbReference type="ChEBI" id="CHEBI:30616"/>
        <dbReference type="ChEBI" id="CHEBI:33019"/>
        <dbReference type="ChEBI" id="CHEBI:57844"/>
        <dbReference type="ChEBI" id="CHEBI:78442"/>
        <dbReference type="ChEBI" id="CHEBI:78530"/>
        <dbReference type="ChEBI" id="CHEBI:456215"/>
        <dbReference type="EC" id="6.1.1.10"/>
    </reaction>
</comment>
<comment type="cofactor">
    <cofactor evidence="1">
        <name>Zn(2+)</name>
        <dbReference type="ChEBI" id="CHEBI:29105"/>
    </cofactor>
    <text evidence="1">Binds 1 zinc ion per subunit.</text>
</comment>
<comment type="subunit">
    <text evidence="1">Homodimer.</text>
</comment>
<comment type="subcellular location">
    <subcellularLocation>
        <location evidence="1">Cytoplasm</location>
    </subcellularLocation>
</comment>
<comment type="similarity">
    <text evidence="1">Belongs to the class-I aminoacyl-tRNA synthetase family. MetG type 1 subfamily.</text>
</comment>
<name>SYM_VIBA3</name>
<sequence length="686" mass="77853">MATDPRQLLVTCALPYANGSIHLGHMLEHIQADIWVRYQRLRGNTVNFICADDAHGTPIMLKAQQMGITPEEMIAAVSEEHQKDFAGFDISFDNYHSTHSEENRELASHIYLELKKNGFISSRTISQLFDPEKEMFLPDRFVKGTCPKCKSEDQYGDNCDNCGETYSPTELINPKSAVSGATPVMKDSEHFFFDLPQFESMLKEWTRSGSLQNETANKMQEWFESGLQQWDISRDAPYFGFEIPGEKDKFFYVWLDAPVGYMASFKNLCDKRDDLNFDEYWKKDSTTELYHFIGKDIVYFHSLFWPAMLEGAGFRKPNNVFVHGYVTVNGAKMSKSKGTFIKASTYLNHLDPECLRYYYAAKLNSRIDDLDLNLEDFTQRVNADVVNKIVNLASRNAGFITKRFEGKLSAEFAEPELYNEFVAAAERIGQLYETREFSRAIREITALADKANQYIDEKAPWVLAKEEGKEKELQEVSSVGINLFRVLMAYLKPVMPELAARTEAFLNEELTWEAIATPLTDHEITKFKALFSRIDPKKVEAMIESSKEDAAAEAAAKEKAEAEKEQASQTELDKEPIADEIEFDAFSAVDMRIARIISCEEVPKANKLLKFQLDIGGETRQVFSGIKSAYKPEELEGKLTVMVANLKPRKMKFGMSEGMILAAGPGGSDLWILEPHEGAQPGMRVM</sequence>
<protein>
    <recommendedName>
        <fullName evidence="1">Methionine--tRNA ligase</fullName>
        <ecNumber evidence="1">6.1.1.10</ecNumber>
    </recommendedName>
    <alternativeName>
        <fullName evidence="1">Methionyl-tRNA synthetase</fullName>
        <shortName evidence="1">MetRS</shortName>
    </alternativeName>
</protein>
<reference key="1">
    <citation type="submission" date="2009-02" db="EMBL/GenBank/DDBJ databases">
        <title>Vibrio splendidus str. LGP32 complete genome.</title>
        <authorList>
            <person name="Mazel D."/>
            <person name="Le Roux F."/>
        </authorList>
    </citation>
    <scope>NUCLEOTIDE SEQUENCE [LARGE SCALE GENOMIC DNA]</scope>
    <source>
        <strain>LGP32</strain>
    </source>
</reference>